<accession>C1ESS0</accession>
<name>Y4487_BACC3</name>
<organism>
    <name type="scientific">Bacillus cereus (strain 03BB102)</name>
    <dbReference type="NCBI Taxonomy" id="572264"/>
    <lineage>
        <taxon>Bacteria</taxon>
        <taxon>Bacillati</taxon>
        <taxon>Bacillota</taxon>
        <taxon>Bacilli</taxon>
        <taxon>Bacillales</taxon>
        <taxon>Bacillaceae</taxon>
        <taxon>Bacillus</taxon>
        <taxon>Bacillus cereus group</taxon>
    </lineage>
</organism>
<reference key="1">
    <citation type="submission" date="2009-02" db="EMBL/GenBank/DDBJ databases">
        <title>Genome sequence of Bacillus cereus 03BB102.</title>
        <authorList>
            <person name="Dodson R.J."/>
            <person name="Jackson P."/>
            <person name="Munk A.C."/>
            <person name="Brettin T."/>
            <person name="Bruce D."/>
            <person name="Detter C."/>
            <person name="Tapia R."/>
            <person name="Han C."/>
            <person name="Sutton G."/>
            <person name="Sims D."/>
        </authorList>
    </citation>
    <scope>NUCLEOTIDE SEQUENCE [LARGE SCALE GENOMIC DNA]</scope>
    <source>
        <strain>03BB102</strain>
    </source>
</reference>
<evidence type="ECO:0000255" key="1">
    <source>
        <dbReference type="HAMAP-Rule" id="MF_02100"/>
    </source>
</evidence>
<sequence length="212" mass="24277">MGTEFNGLFDEWAHTYDSFVQGEDIQYKEVFAHYEDILEDVVNKSFGNVLEFGVGTGNLTNKLLLAGRTVYGIEPSREMRMIAKEKLPKEFSITEGDFLSFEVPNSIDTIVSTYAFHHLTDDEKNVAIAKYSQLLNKGGKIVFADTIFADQDAYDKTVEAAKQRGFHQLANDLQTEYYTRIPVMQTIFENNGFHVTFTRLNHFVWVMEATKQ</sequence>
<proteinExistence type="inferred from homology"/>
<gene>
    <name type="ordered locus">BCA_4487</name>
</gene>
<feature type="chain" id="PRO_1000189548" description="Uncharacterized methyltransferase BCA_4487">
    <location>
        <begin position="1"/>
        <end position="212"/>
    </location>
</feature>
<feature type="binding site" evidence="1">
    <location>
        <position position="53"/>
    </location>
    <ligand>
        <name>S-adenosyl-L-methionine</name>
        <dbReference type="ChEBI" id="CHEBI:59789"/>
    </ligand>
</feature>
<feature type="binding site" evidence="1">
    <location>
        <position position="74"/>
    </location>
    <ligand>
        <name>S-adenosyl-L-methionine</name>
        <dbReference type="ChEBI" id="CHEBI:59789"/>
    </ligand>
</feature>
<feature type="binding site" evidence="1">
    <location>
        <position position="97"/>
    </location>
    <ligand>
        <name>S-adenosyl-L-methionine</name>
        <dbReference type="ChEBI" id="CHEBI:59789"/>
    </ligand>
</feature>
<protein>
    <recommendedName>
        <fullName evidence="1">Uncharacterized methyltransferase BCA_4487</fullName>
        <ecNumber evidence="1">2.1.1.-</ecNumber>
    </recommendedName>
</protein>
<dbReference type="EC" id="2.1.1.-" evidence="1"/>
<dbReference type="EMBL" id="CP001407">
    <property type="protein sequence ID" value="ACO30884.1"/>
    <property type="molecule type" value="Genomic_DNA"/>
</dbReference>
<dbReference type="RefSeq" id="WP_000536319.1">
    <property type="nucleotide sequence ID" value="NZ_CP009318.1"/>
</dbReference>
<dbReference type="SMR" id="C1ESS0"/>
<dbReference type="KEGG" id="bcx:BCA_4487"/>
<dbReference type="PATRIC" id="fig|572264.18.peg.4435"/>
<dbReference type="Proteomes" id="UP000002210">
    <property type="component" value="Chromosome"/>
</dbReference>
<dbReference type="GO" id="GO:0008757">
    <property type="term" value="F:S-adenosylmethionine-dependent methyltransferase activity"/>
    <property type="evidence" value="ECO:0007669"/>
    <property type="project" value="UniProtKB-UniRule"/>
</dbReference>
<dbReference type="GO" id="GO:0032259">
    <property type="term" value="P:methylation"/>
    <property type="evidence" value="ECO:0007669"/>
    <property type="project" value="UniProtKB-KW"/>
</dbReference>
<dbReference type="CDD" id="cd02440">
    <property type="entry name" value="AdoMet_MTases"/>
    <property type="match status" value="1"/>
</dbReference>
<dbReference type="Gene3D" id="3.40.50.150">
    <property type="entry name" value="Vaccinia Virus protein VP39"/>
    <property type="match status" value="1"/>
</dbReference>
<dbReference type="HAMAP" id="MF_02100">
    <property type="entry name" value="Methyltr_YrrT"/>
    <property type="match status" value="1"/>
</dbReference>
<dbReference type="InterPro" id="IPR041698">
    <property type="entry name" value="Methyltransf_25"/>
</dbReference>
<dbReference type="InterPro" id="IPR029063">
    <property type="entry name" value="SAM-dependent_MTases_sf"/>
</dbReference>
<dbReference type="InterPro" id="IPR023553">
    <property type="entry name" value="Uncharacterised_MeTfrase_YrrT"/>
</dbReference>
<dbReference type="PANTHER" id="PTHR43861:SF1">
    <property type="entry name" value="TRANS-ACONITATE 2-METHYLTRANSFERASE"/>
    <property type="match status" value="1"/>
</dbReference>
<dbReference type="PANTHER" id="PTHR43861">
    <property type="entry name" value="TRANS-ACONITATE 2-METHYLTRANSFERASE-RELATED"/>
    <property type="match status" value="1"/>
</dbReference>
<dbReference type="Pfam" id="PF13649">
    <property type="entry name" value="Methyltransf_25"/>
    <property type="match status" value="1"/>
</dbReference>
<dbReference type="SUPFAM" id="SSF53335">
    <property type="entry name" value="S-adenosyl-L-methionine-dependent methyltransferases"/>
    <property type="match status" value="1"/>
</dbReference>
<keyword id="KW-0489">Methyltransferase</keyword>
<keyword id="KW-0949">S-adenosyl-L-methionine</keyword>
<keyword id="KW-0808">Transferase</keyword>
<comment type="function">
    <text evidence="1">Could be a S-adenosyl-L-methionine-dependent methyltransferase.</text>
</comment>
<comment type="similarity">
    <text evidence="1">Belongs to the methyltransferase superfamily. YrrT family.</text>
</comment>